<name>MNMA_SHEDO</name>
<evidence type="ECO:0000255" key="1">
    <source>
        <dbReference type="HAMAP-Rule" id="MF_00144"/>
    </source>
</evidence>
<evidence type="ECO:0000305" key="2"/>
<proteinExistence type="inferred from homology"/>
<accession>Q12N64</accession>
<protein>
    <recommendedName>
        <fullName evidence="1">tRNA-specific 2-thiouridylase MnmA</fullName>
        <ecNumber evidence="1">2.8.1.13</ecNumber>
    </recommendedName>
</protein>
<organism>
    <name type="scientific">Shewanella denitrificans (strain OS217 / ATCC BAA-1090 / DSM 15013)</name>
    <dbReference type="NCBI Taxonomy" id="318161"/>
    <lineage>
        <taxon>Bacteria</taxon>
        <taxon>Pseudomonadati</taxon>
        <taxon>Pseudomonadota</taxon>
        <taxon>Gammaproteobacteria</taxon>
        <taxon>Alteromonadales</taxon>
        <taxon>Shewanellaceae</taxon>
        <taxon>Shewanella</taxon>
    </lineage>
</organism>
<dbReference type="EC" id="2.8.1.13" evidence="1"/>
<dbReference type="EMBL" id="CP000302">
    <property type="protein sequence ID" value="ABE55112.1"/>
    <property type="status" value="ALT_INIT"/>
    <property type="molecule type" value="Genomic_DNA"/>
</dbReference>
<dbReference type="RefSeq" id="WP_041405746.1">
    <property type="nucleotide sequence ID" value="NC_007954.1"/>
</dbReference>
<dbReference type="SMR" id="Q12N64"/>
<dbReference type="STRING" id="318161.Sden_1828"/>
<dbReference type="KEGG" id="sdn:Sden_1828"/>
<dbReference type="eggNOG" id="COG0482">
    <property type="taxonomic scope" value="Bacteria"/>
</dbReference>
<dbReference type="HOGENOM" id="CLU_035188_1_0_6"/>
<dbReference type="OrthoDB" id="9800696at2"/>
<dbReference type="Proteomes" id="UP000001982">
    <property type="component" value="Chromosome"/>
</dbReference>
<dbReference type="GO" id="GO:0005737">
    <property type="term" value="C:cytoplasm"/>
    <property type="evidence" value="ECO:0007669"/>
    <property type="project" value="UniProtKB-SubCell"/>
</dbReference>
<dbReference type="GO" id="GO:0005524">
    <property type="term" value="F:ATP binding"/>
    <property type="evidence" value="ECO:0007669"/>
    <property type="project" value="UniProtKB-KW"/>
</dbReference>
<dbReference type="GO" id="GO:0000049">
    <property type="term" value="F:tRNA binding"/>
    <property type="evidence" value="ECO:0007669"/>
    <property type="project" value="UniProtKB-KW"/>
</dbReference>
<dbReference type="GO" id="GO:0103016">
    <property type="term" value="F:tRNA-uridine 2-sulfurtransferase activity"/>
    <property type="evidence" value="ECO:0007669"/>
    <property type="project" value="UniProtKB-EC"/>
</dbReference>
<dbReference type="GO" id="GO:0002143">
    <property type="term" value="P:tRNA wobble position uridine thiolation"/>
    <property type="evidence" value="ECO:0007669"/>
    <property type="project" value="TreeGrafter"/>
</dbReference>
<dbReference type="CDD" id="cd01998">
    <property type="entry name" value="MnmA_TRMU-like"/>
    <property type="match status" value="1"/>
</dbReference>
<dbReference type="FunFam" id="2.30.30.280:FF:000001">
    <property type="entry name" value="tRNA-specific 2-thiouridylase MnmA"/>
    <property type="match status" value="1"/>
</dbReference>
<dbReference type="FunFam" id="2.40.30.10:FF:000023">
    <property type="entry name" value="tRNA-specific 2-thiouridylase MnmA"/>
    <property type="match status" value="1"/>
</dbReference>
<dbReference type="FunFam" id="3.40.50.620:FF:000004">
    <property type="entry name" value="tRNA-specific 2-thiouridylase MnmA"/>
    <property type="match status" value="1"/>
</dbReference>
<dbReference type="Gene3D" id="2.30.30.280">
    <property type="entry name" value="Adenine nucleotide alpha hydrolases-like domains"/>
    <property type="match status" value="1"/>
</dbReference>
<dbReference type="Gene3D" id="3.40.50.620">
    <property type="entry name" value="HUPs"/>
    <property type="match status" value="1"/>
</dbReference>
<dbReference type="Gene3D" id="2.40.30.10">
    <property type="entry name" value="Translation factors"/>
    <property type="match status" value="1"/>
</dbReference>
<dbReference type="HAMAP" id="MF_00144">
    <property type="entry name" value="tRNA_thiouridyl_MnmA"/>
    <property type="match status" value="1"/>
</dbReference>
<dbReference type="InterPro" id="IPR004506">
    <property type="entry name" value="MnmA-like"/>
</dbReference>
<dbReference type="InterPro" id="IPR046885">
    <property type="entry name" value="MnmA-like_C"/>
</dbReference>
<dbReference type="InterPro" id="IPR046884">
    <property type="entry name" value="MnmA-like_central"/>
</dbReference>
<dbReference type="InterPro" id="IPR023382">
    <property type="entry name" value="MnmA-like_central_sf"/>
</dbReference>
<dbReference type="InterPro" id="IPR014729">
    <property type="entry name" value="Rossmann-like_a/b/a_fold"/>
</dbReference>
<dbReference type="NCBIfam" id="NF001138">
    <property type="entry name" value="PRK00143.1"/>
    <property type="match status" value="1"/>
</dbReference>
<dbReference type="NCBIfam" id="TIGR00420">
    <property type="entry name" value="trmU"/>
    <property type="match status" value="1"/>
</dbReference>
<dbReference type="PANTHER" id="PTHR11933:SF5">
    <property type="entry name" value="MITOCHONDRIAL TRNA-SPECIFIC 2-THIOURIDYLASE 1"/>
    <property type="match status" value="1"/>
</dbReference>
<dbReference type="PANTHER" id="PTHR11933">
    <property type="entry name" value="TRNA 5-METHYLAMINOMETHYL-2-THIOURIDYLATE -METHYLTRANSFERASE"/>
    <property type="match status" value="1"/>
</dbReference>
<dbReference type="Pfam" id="PF03054">
    <property type="entry name" value="tRNA_Me_trans"/>
    <property type="match status" value="1"/>
</dbReference>
<dbReference type="Pfam" id="PF20258">
    <property type="entry name" value="tRNA_Me_trans_C"/>
    <property type="match status" value="1"/>
</dbReference>
<dbReference type="Pfam" id="PF20259">
    <property type="entry name" value="tRNA_Me_trans_M"/>
    <property type="match status" value="1"/>
</dbReference>
<dbReference type="SUPFAM" id="SSF52402">
    <property type="entry name" value="Adenine nucleotide alpha hydrolases-like"/>
    <property type="match status" value="1"/>
</dbReference>
<gene>
    <name evidence="1" type="primary">mnmA</name>
    <name type="ordered locus">Sden_1828</name>
</gene>
<comment type="function">
    <text evidence="1">Catalyzes the 2-thiolation of uridine at the wobble position (U34) of tRNA, leading to the formation of s(2)U34.</text>
</comment>
<comment type="catalytic activity">
    <reaction evidence="1">
        <text>S-sulfanyl-L-cysteinyl-[protein] + uridine(34) in tRNA + AH2 + ATP = 2-thiouridine(34) in tRNA + L-cysteinyl-[protein] + A + AMP + diphosphate + H(+)</text>
        <dbReference type="Rhea" id="RHEA:47032"/>
        <dbReference type="Rhea" id="RHEA-COMP:10131"/>
        <dbReference type="Rhea" id="RHEA-COMP:11726"/>
        <dbReference type="Rhea" id="RHEA-COMP:11727"/>
        <dbReference type="Rhea" id="RHEA-COMP:11728"/>
        <dbReference type="ChEBI" id="CHEBI:13193"/>
        <dbReference type="ChEBI" id="CHEBI:15378"/>
        <dbReference type="ChEBI" id="CHEBI:17499"/>
        <dbReference type="ChEBI" id="CHEBI:29950"/>
        <dbReference type="ChEBI" id="CHEBI:30616"/>
        <dbReference type="ChEBI" id="CHEBI:33019"/>
        <dbReference type="ChEBI" id="CHEBI:61963"/>
        <dbReference type="ChEBI" id="CHEBI:65315"/>
        <dbReference type="ChEBI" id="CHEBI:87170"/>
        <dbReference type="ChEBI" id="CHEBI:456215"/>
        <dbReference type="EC" id="2.8.1.13"/>
    </reaction>
</comment>
<comment type="subcellular location">
    <subcellularLocation>
        <location evidence="1">Cytoplasm</location>
    </subcellularLocation>
</comment>
<comment type="similarity">
    <text evidence="1">Belongs to the MnmA/TRMU family.</text>
</comment>
<comment type="sequence caution" evidence="2">
    <conflict type="erroneous initiation">
        <sequence resource="EMBL-CDS" id="ABE55112"/>
    </conflict>
</comment>
<sequence length="372" mass="41554">MTSIKPIHNGKKVIVGMSGGVDSSVSAYLLMQQGYEVEGLFMKNWEEDDTDEYCAAADDLKDAQAVCDKLGIKMHTVNFAAEYWDNVFEYFLAEYKAGRTPNPDIMCNKEIKFKAFLEFADDILDADYIAMGHYVRRRDNSDGSVQMLRGVDGNKDQSYFLYTLSHEQVARSLFPVGELEKHEVRDIAKQMGLITHDKKDSTGICFIGERKFTDFLATYLPAQPGDIETPEGEVIGKHQGLMYHTLGQRKGLGIGGLKDSNEDPWYVVEKDLLRNVLIVAQGGNHPRLMSQGMTVNQLHWVDRKGPATDSQLVVKTRYRQTDVPCRISFDDPQRITVIFDSPVAAVTPGQSAVFYDGDVCLGGGIIDSLIRG</sequence>
<feature type="chain" id="PRO_0000349792" description="tRNA-specific 2-thiouridylase MnmA">
    <location>
        <begin position="1"/>
        <end position="372"/>
    </location>
</feature>
<feature type="region of interest" description="Interaction with target base in tRNA" evidence="1">
    <location>
        <begin position="102"/>
        <end position="104"/>
    </location>
</feature>
<feature type="region of interest" description="Interaction with tRNA" evidence="1">
    <location>
        <begin position="155"/>
        <end position="157"/>
    </location>
</feature>
<feature type="region of interest" description="Interaction with tRNA" evidence="1">
    <location>
        <begin position="317"/>
        <end position="318"/>
    </location>
</feature>
<feature type="active site" description="Nucleophile" evidence="1">
    <location>
        <position position="107"/>
    </location>
</feature>
<feature type="active site" description="Cysteine persulfide intermediate" evidence="1">
    <location>
        <position position="205"/>
    </location>
</feature>
<feature type="binding site" evidence="1">
    <location>
        <begin position="16"/>
        <end position="23"/>
    </location>
    <ligand>
        <name>ATP</name>
        <dbReference type="ChEBI" id="CHEBI:30616"/>
    </ligand>
</feature>
<feature type="binding site" evidence="1">
    <location>
        <position position="42"/>
    </location>
    <ligand>
        <name>ATP</name>
        <dbReference type="ChEBI" id="CHEBI:30616"/>
    </ligand>
</feature>
<feature type="binding site" evidence="1">
    <location>
        <position position="132"/>
    </location>
    <ligand>
        <name>ATP</name>
        <dbReference type="ChEBI" id="CHEBI:30616"/>
    </ligand>
</feature>
<feature type="site" description="Interaction with tRNA" evidence="1">
    <location>
        <position position="133"/>
    </location>
</feature>
<feature type="site" description="Interaction with tRNA" evidence="1">
    <location>
        <position position="350"/>
    </location>
</feature>
<feature type="disulfide bond" description="Alternate" evidence="1">
    <location>
        <begin position="107"/>
        <end position="205"/>
    </location>
</feature>
<reference key="1">
    <citation type="submission" date="2006-03" db="EMBL/GenBank/DDBJ databases">
        <title>Complete sequence of Shewanella denitrificans OS217.</title>
        <authorList>
            <consortium name="US DOE Joint Genome Institute"/>
            <person name="Copeland A."/>
            <person name="Lucas S."/>
            <person name="Lapidus A."/>
            <person name="Barry K."/>
            <person name="Detter J.C."/>
            <person name="Glavina del Rio T."/>
            <person name="Hammon N."/>
            <person name="Israni S."/>
            <person name="Dalin E."/>
            <person name="Tice H."/>
            <person name="Pitluck S."/>
            <person name="Brettin T."/>
            <person name="Bruce D."/>
            <person name="Han C."/>
            <person name="Tapia R."/>
            <person name="Gilna P."/>
            <person name="Kiss H."/>
            <person name="Schmutz J."/>
            <person name="Larimer F."/>
            <person name="Land M."/>
            <person name="Hauser L."/>
            <person name="Kyrpides N."/>
            <person name="Lykidis A."/>
            <person name="Richardson P."/>
        </authorList>
    </citation>
    <scope>NUCLEOTIDE SEQUENCE [LARGE SCALE GENOMIC DNA]</scope>
    <source>
        <strain>OS217 / ATCC BAA-1090 / DSM 15013</strain>
    </source>
</reference>
<keyword id="KW-0067">ATP-binding</keyword>
<keyword id="KW-0963">Cytoplasm</keyword>
<keyword id="KW-1015">Disulfide bond</keyword>
<keyword id="KW-0547">Nucleotide-binding</keyword>
<keyword id="KW-1185">Reference proteome</keyword>
<keyword id="KW-0694">RNA-binding</keyword>
<keyword id="KW-0808">Transferase</keyword>
<keyword id="KW-0819">tRNA processing</keyword>
<keyword id="KW-0820">tRNA-binding</keyword>